<evidence type="ECO:0000255" key="1">
    <source>
        <dbReference type="HAMAP-Rule" id="MF_01328"/>
    </source>
</evidence>
<evidence type="ECO:0000256" key="2">
    <source>
        <dbReference type="SAM" id="MobiDB-lite"/>
    </source>
</evidence>
<evidence type="ECO:0000305" key="3"/>
<feature type="chain" id="PRO_1000142109" description="Large ribosomal subunit protein uL4">
    <location>
        <begin position="1"/>
        <end position="206"/>
    </location>
</feature>
<feature type="region of interest" description="Disordered" evidence="2">
    <location>
        <begin position="43"/>
        <end position="78"/>
    </location>
</feature>
<feature type="compositionally biased region" description="Basic and acidic residues" evidence="2">
    <location>
        <begin position="49"/>
        <end position="58"/>
    </location>
</feature>
<feature type="compositionally biased region" description="Basic residues" evidence="2">
    <location>
        <begin position="59"/>
        <end position="70"/>
    </location>
</feature>
<reference key="1">
    <citation type="journal article" date="2008" name="Genome Res.">
        <title>Genome sequence of the beta-rhizobium Cupriavidus taiwanensis and comparative genomics of rhizobia.</title>
        <authorList>
            <person name="Amadou C."/>
            <person name="Pascal G."/>
            <person name="Mangenot S."/>
            <person name="Glew M."/>
            <person name="Bontemps C."/>
            <person name="Capela D."/>
            <person name="Carrere S."/>
            <person name="Cruveiller S."/>
            <person name="Dossat C."/>
            <person name="Lajus A."/>
            <person name="Marchetti M."/>
            <person name="Poinsot V."/>
            <person name="Rouy Z."/>
            <person name="Servin B."/>
            <person name="Saad M."/>
            <person name="Schenowitz C."/>
            <person name="Barbe V."/>
            <person name="Batut J."/>
            <person name="Medigue C."/>
            <person name="Masson-Boivin C."/>
        </authorList>
    </citation>
    <scope>NUCLEOTIDE SEQUENCE [LARGE SCALE GENOMIC DNA]</scope>
    <source>
        <strain>DSM 17343 / BCRC 17206 / CCUG 44338 / CIP 107171 / LMG 19424 / R1</strain>
    </source>
</reference>
<keyword id="KW-0687">Ribonucleoprotein</keyword>
<keyword id="KW-0689">Ribosomal protein</keyword>
<keyword id="KW-0694">RNA-binding</keyword>
<keyword id="KW-0699">rRNA-binding</keyword>
<gene>
    <name evidence="1" type="primary">rplD</name>
    <name type="ordered locus">RALTA_A2943</name>
</gene>
<name>RL4_CUPTR</name>
<protein>
    <recommendedName>
        <fullName evidence="1">Large ribosomal subunit protein uL4</fullName>
    </recommendedName>
    <alternativeName>
        <fullName evidence="3">50S ribosomal protein L4</fullName>
    </alternativeName>
</protein>
<dbReference type="EMBL" id="CU633749">
    <property type="protein sequence ID" value="CAQ70867.1"/>
    <property type="molecule type" value="Genomic_DNA"/>
</dbReference>
<dbReference type="RefSeq" id="WP_011299311.1">
    <property type="nucleotide sequence ID" value="NC_010528.1"/>
</dbReference>
<dbReference type="SMR" id="B3R7S2"/>
<dbReference type="GeneID" id="29762345"/>
<dbReference type="KEGG" id="cti:RALTA_A2943"/>
<dbReference type="eggNOG" id="COG0088">
    <property type="taxonomic scope" value="Bacteria"/>
</dbReference>
<dbReference type="HOGENOM" id="CLU_041575_5_2_4"/>
<dbReference type="BioCyc" id="CTAI977880:RALTA_RS14350-MONOMER"/>
<dbReference type="Proteomes" id="UP000001692">
    <property type="component" value="Chromosome 1"/>
</dbReference>
<dbReference type="GO" id="GO:1990904">
    <property type="term" value="C:ribonucleoprotein complex"/>
    <property type="evidence" value="ECO:0007669"/>
    <property type="project" value="UniProtKB-KW"/>
</dbReference>
<dbReference type="GO" id="GO:0005840">
    <property type="term" value="C:ribosome"/>
    <property type="evidence" value="ECO:0007669"/>
    <property type="project" value="UniProtKB-KW"/>
</dbReference>
<dbReference type="GO" id="GO:0019843">
    <property type="term" value="F:rRNA binding"/>
    <property type="evidence" value="ECO:0007669"/>
    <property type="project" value="UniProtKB-UniRule"/>
</dbReference>
<dbReference type="GO" id="GO:0003735">
    <property type="term" value="F:structural constituent of ribosome"/>
    <property type="evidence" value="ECO:0007669"/>
    <property type="project" value="InterPro"/>
</dbReference>
<dbReference type="GO" id="GO:0006412">
    <property type="term" value="P:translation"/>
    <property type="evidence" value="ECO:0007669"/>
    <property type="project" value="UniProtKB-UniRule"/>
</dbReference>
<dbReference type="Gene3D" id="3.40.1370.10">
    <property type="match status" value="1"/>
</dbReference>
<dbReference type="HAMAP" id="MF_01328_B">
    <property type="entry name" value="Ribosomal_uL4_B"/>
    <property type="match status" value="1"/>
</dbReference>
<dbReference type="InterPro" id="IPR002136">
    <property type="entry name" value="Ribosomal_uL4"/>
</dbReference>
<dbReference type="InterPro" id="IPR013005">
    <property type="entry name" value="Ribosomal_uL4-like"/>
</dbReference>
<dbReference type="InterPro" id="IPR023574">
    <property type="entry name" value="Ribosomal_uL4_dom_sf"/>
</dbReference>
<dbReference type="NCBIfam" id="TIGR03953">
    <property type="entry name" value="rplD_bact"/>
    <property type="match status" value="1"/>
</dbReference>
<dbReference type="PANTHER" id="PTHR10746">
    <property type="entry name" value="50S RIBOSOMAL PROTEIN L4"/>
    <property type="match status" value="1"/>
</dbReference>
<dbReference type="PANTHER" id="PTHR10746:SF6">
    <property type="entry name" value="LARGE RIBOSOMAL SUBUNIT PROTEIN UL4M"/>
    <property type="match status" value="1"/>
</dbReference>
<dbReference type="Pfam" id="PF00573">
    <property type="entry name" value="Ribosomal_L4"/>
    <property type="match status" value="1"/>
</dbReference>
<dbReference type="SUPFAM" id="SSF52166">
    <property type="entry name" value="Ribosomal protein L4"/>
    <property type="match status" value="1"/>
</dbReference>
<organism>
    <name type="scientific">Cupriavidus taiwanensis (strain DSM 17343 / BCRC 17206 / CCUG 44338 / CIP 107171 / LMG 19424 / R1)</name>
    <name type="common">Ralstonia taiwanensis (strain LMG 19424)</name>
    <dbReference type="NCBI Taxonomy" id="977880"/>
    <lineage>
        <taxon>Bacteria</taxon>
        <taxon>Pseudomonadati</taxon>
        <taxon>Pseudomonadota</taxon>
        <taxon>Betaproteobacteria</taxon>
        <taxon>Burkholderiales</taxon>
        <taxon>Burkholderiaceae</taxon>
        <taxon>Cupriavidus</taxon>
    </lineage>
</organism>
<proteinExistence type="inferred from homology"/>
<sequence length="206" mass="22883">MELKLLQDNGQVGAGVAASPEVFGRDYNEALVHQIVVAYQANARSGNRKQKDREEVKHTTKKPWRQKGTGRARAGMSSSPLWRGGGRIFPNSPEENFSQKVNKKMFRAGMRSIYSQLAREGRINVVDGFTVDAPKTKLLADKFKAMGLDSVLIITDSLDENLYLASRNLPHVAVVEPRQADPLSLVHYKKVLVTKAAVAQIEELLK</sequence>
<comment type="function">
    <text evidence="1">One of the primary rRNA binding proteins, this protein initially binds near the 5'-end of the 23S rRNA. It is important during the early stages of 50S assembly. It makes multiple contacts with different domains of the 23S rRNA in the assembled 50S subunit and ribosome.</text>
</comment>
<comment type="function">
    <text evidence="1">Forms part of the polypeptide exit tunnel.</text>
</comment>
<comment type="subunit">
    <text evidence="1">Part of the 50S ribosomal subunit.</text>
</comment>
<comment type="similarity">
    <text evidence="1">Belongs to the universal ribosomal protein uL4 family.</text>
</comment>
<accession>B3R7S2</accession>